<feature type="chain" id="PRO_1000002664" description="UDP-N-acetylglucosamine--N-acetylmuramyl-(pentapeptide) pyrophosphoryl-undecaprenol N-acetylglucosamine transferase">
    <location>
        <begin position="1"/>
        <end position="357"/>
    </location>
</feature>
<feature type="binding site" evidence="1">
    <location>
        <begin position="10"/>
        <end position="12"/>
    </location>
    <ligand>
        <name>UDP-N-acetyl-alpha-D-glucosamine</name>
        <dbReference type="ChEBI" id="CHEBI:57705"/>
    </ligand>
</feature>
<feature type="binding site" evidence="1">
    <location>
        <position position="124"/>
    </location>
    <ligand>
        <name>UDP-N-acetyl-alpha-D-glucosamine</name>
        <dbReference type="ChEBI" id="CHEBI:57705"/>
    </ligand>
</feature>
<feature type="binding site" evidence="1">
    <location>
        <position position="189"/>
    </location>
    <ligand>
        <name>UDP-N-acetyl-alpha-D-glucosamine</name>
        <dbReference type="ChEBI" id="CHEBI:57705"/>
    </ligand>
</feature>
<feature type="binding site" evidence="1">
    <location>
        <position position="244"/>
    </location>
    <ligand>
        <name>UDP-N-acetyl-alpha-D-glucosamine</name>
        <dbReference type="ChEBI" id="CHEBI:57705"/>
    </ligand>
</feature>
<feature type="binding site" evidence="1">
    <location>
        <position position="289"/>
    </location>
    <ligand>
        <name>UDP-N-acetyl-alpha-D-glucosamine</name>
        <dbReference type="ChEBI" id="CHEBI:57705"/>
    </ligand>
</feature>
<proteinExistence type="inferred from homology"/>
<evidence type="ECO:0000255" key="1">
    <source>
        <dbReference type="HAMAP-Rule" id="MF_00033"/>
    </source>
</evidence>
<organism>
    <name type="scientific">Lactococcus lactis subsp. cremoris (strain SK11)</name>
    <dbReference type="NCBI Taxonomy" id="272622"/>
    <lineage>
        <taxon>Bacteria</taxon>
        <taxon>Bacillati</taxon>
        <taxon>Bacillota</taxon>
        <taxon>Bacilli</taxon>
        <taxon>Lactobacillales</taxon>
        <taxon>Streptococcaceae</taxon>
        <taxon>Lactococcus</taxon>
        <taxon>Lactococcus cremoris subsp. cremoris</taxon>
    </lineage>
</organism>
<comment type="function">
    <text evidence="1">Cell wall formation. Catalyzes the transfer of a GlcNAc subunit on undecaprenyl-pyrophosphoryl-MurNAc-pentapeptide (lipid intermediate I) to form undecaprenyl-pyrophosphoryl-MurNAc-(pentapeptide)GlcNAc (lipid intermediate II).</text>
</comment>
<comment type="catalytic activity">
    <reaction evidence="1">
        <text>Mur2Ac(oyl-L-Ala-gamma-D-Glu-L-Lys-D-Ala-D-Ala)-di-trans,octa-cis-undecaprenyl diphosphate + UDP-N-acetyl-alpha-D-glucosamine = beta-D-GlcNAc-(1-&gt;4)-Mur2Ac(oyl-L-Ala-gamma-D-Glu-L-Lys-D-Ala-D-Ala)-di-trans,octa-cis-undecaprenyl diphosphate + UDP + H(+)</text>
        <dbReference type="Rhea" id="RHEA:23192"/>
        <dbReference type="ChEBI" id="CHEBI:15378"/>
        <dbReference type="ChEBI" id="CHEBI:57705"/>
        <dbReference type="ChEBI" id="CHEBI:58223"/>
        <dbReference type="ChEBI" id="CHEBI:60032"/>
        <dbReference type="ChEBI" id="CHEBI:60033"/>
        <dbReference type="EC" id="2.4.1.227"/>
    </reaction>
</comment>
<comment type="pathway">
    <text evidence="1">Cell wall biogenesis; peptidoglycan biosynthesis.</text>
</comment>
<comment type="subcellular location">
    <subcellularLocation>
        <location evidence="1">Cell membrane</location>
        <topology evidence="1">Peripheral membrane protein</topology>
        <orientation evidence="1">Cytoplasmic side</orientation>
    </subcellularLocation>
</comment>
<comment type="similarity">
    <text evidence="1">Belongs to the glycosyltransferase 28 family. MurG subfamily.</text>
</comment>
<dbReference type="EC" id="2.4.1.227" evidence="1"/>
<dbReference type="EMBL" id="CP000425">
    <property type="protein sequence ID" value="ABJ73192.1"/>
    <property type="molecule type" value="Genomic_DNA"/>
</dbReference>
<dbReference type="RefSeq" id="WP_011676626.1">
    <property type="nucleotide sequence ID" value="NC_008527.1"/>
</dbReference>
<dbReference type="SMR" id="Q02XY0"/>
<dbReference type="CAZy" id="GT28">
    <property type="family name" value="Glycosyltransferase Family 28"/>
</dbReference>
<dbReference type="KEGG" id="llc:LACR_1696"/>
<dbReference type="HOGENOM" id="CLU_037404_0_1_9"/>
<dbReference type="UniPathway" id="UPA00219"/>
<dbReference type="Proteomes" id="UP000000240">
    <property type="component" value="Chromosome"/>
</dbReference>
<dbReference type="GO" id="GO:0005886">
    <property type="term" value="C:plasma membrane"/>
    <property type="evidence" value="ECO:0007669"/>
    <property type="project" value="UniProtKB-SubCell"/>
</dbReference>
<dbReference type="GO" id="GO:0050511">
    <property type="term" value="F:undecaprenyldiphospho-muramoylpentapeptide beta-N-acetylglucosaminyltransferase activity"/>
    <property type="evidence" value="ECO:0007669"/>
    <property type="project" value="UniProtKB-UniRule"/>
</dbReference>
<dbReference type="GO" id="GO:0005975">
    <property type="term" value="P:carbohydrate metabolic process"/>
    <property type="evidence" value="ECO:0007669"/>
    <property type="project" value="InterPro"/>
</dbReference>
<dbReference type="GO" id="GO:0051301">
    <property type="term" value="P:cell division"/>
    <property type="evidence" value="ECO:0007669"/>
    <property type="project" value="UniProtKB-KW"/>
</dbReference>
<dbReference type="GO" id="GO:0071555">
    <property type="term" value="P:cell wall organization"/>
    <property type="evidence" value="ECO:0007669"/>
    <property type="project" value="UniProtKB-KW"/>
</dbReference>
<dbReference type="GO" id="GO:0030259">
    <property type="term" value="P:lipid glycosylation"/>
    <property type="evidence" value="ECO:0007669"/>
    <property type="project" value="UniProtKB-UniRule"/>
</dbReference>
<dbReference type="GO" id="GO:0009252">
    <property type="term" value="P:peptidoglycan biosynthetic process"/>
    <property type="evidence" value="ECO:0007669"/>
    <property type="project" value="UniProtKB-UniRule"/>
</dbReference>
<dbReference type="GO" id="GO:0008360">
    <property type="term" value="P:regulation of cell shape"/>
    <property type="evidence" value="ECO:0007669"/>
    <property type="project" value="UniProtKB-KW"/>
</dbReference>
<dbReference type="CDD" id="cd03785">
    <property type="entry name" value="GT28_MurG"/>
    <property type="match status" value="1"/>
</dbReference>
<dbReference type="Gene3D" id="3.40.50.2000">
    <property type="entry name" value="Glycogen Phosphorylase B"/>
    <property type="match status" value="2"/>
</dbReference>
<dbReference type="HAMAP" id="MF_00033">
    <property type="entry name" value="MurG"/>
    <property type="match status" value="1"/>
</dbReference>
<dbReference type="InterPro" id="IPR006009">
    <property type="entry name" value="GlcNAc_MurG"/>
</dbReference>
<dbReference type="InterPro" id="IPR007235">
    <property type="entry name" value="Glyco_trans_28_C"/>
</dbReference>
<dbReference type="InterPro" id="IPR004276">
    <property type="entry name" value="GlycoTrans_28_N"/>
</dbReference>
<dbReference type="NCBIfam" id="TIGR01133">
    <property type="entry name" value="murG"/>
    <property type="match status" value="1"/>
</dbReference>
<dbReference type="PANTHER" id="PTHR21015:SF22">
    <property type="entry name" value="GLYCOSYLTRANSFERASE"/>
    <property type="match status" value="1"/>
</dbReference>
<dbReference type="PANTHER" id="PTHR21015">
    <property type="entry name" value="UDP-N-ACETYLGLUCOSAMINE--N-ACETYLMURAMYL-(PENTAPEPTIDE) PYROPHOSPHORYL-UNDECAPRENOL N-ACETYLGLUCOSAMINE TRANSFERASE 1"/>
    <property type="match status" value="1"/>
</dbReference>
<dbReference type="Pfam" id="PF04101">
    <property type="entry name" value="Glyco_tran_28_C"/>
    <property type="match status" value="1"/>
</dbReference>
<dbReference type="Pfam" id="PF03033">
    <property type="entry name" value="Glyco_transf_28"/>
    <property type="match status" value="1"/>
</dbReference>
<dbReference type="SUPFAM" id="SSF53756">
    <property type="entry name" value="UDP-Glycosyltransferase/glycogen phosphorylase"/>
    <property type="match status" value="1"/>
</dbReference>
<gene>
    <name evidence="1" type="primary">murG</name>
    <name type="ordered locus">LACR_1696</name>
</gene>
<reference key="1">
    <citation type="journal article" date="2006" name="Proc. Natl. Acad. Sci. U.S.A.">
        <title>Comparative genomics of the lactic acid bacteria.</title>
        <authorList>
            <person name="Makarova K.S."/>
            <person name="Slesarev A."/>
            <person name="Wolf Y.I."/>
            <person name="Sorokin A."/>
            <person name="Mirkin B."/>
            <person name="Koonin E.V."/>
            <person name="Pavlov A."/>
            <person name="Pavlova N."/>
            <person name="Karamychev V."/>
            <person name="Polouchine N."/>
            <person name="Shakhova V."/>
            <person name="Grigoriev I."/>
            <person name="Lou Y."/>
            <person name="Rohksar D."/>
            <person name="Lucas S."/>
            <person name="Huang K."/>
            <person name="Goodstein D.M."/>
            <person name="Hawkins T."/>
            <person name="Plengvidhya V."/>
            <person name="Welker D."/>
            <person name="Hughes J."/>
            <person name="Goh Y."/>
            <person name="Benson A."/>
            <person name="Baldwin K."/>
            <person name="Lee J.-H."/>
            <person name="Diaz-Muniz I."/>
            <person name="Dosti B."/>
            <person name="Smeianov V."/>
            <person name="Wechter W."/>
            <person name="Barabote R."/>
            <person name="Lorca G."/>
            <person name="Altermann E."/>
            <person name="Barrangou R."/>
            <person name="Ganesan B."/>
            <person name="Xie Y."/>
            <person name="Rawsthorne H."/>
            <person name="Tamir D."/>
            <person name="Parker C."/>
            <person name="Breidt F."/>
            <person name="Broadbent J.R."/>
            <person name="Hutkins R."/>
            <person name="O'Sullivan D."/>
            <person name="Steele J."/>
            <person name="Unlu G."/>
            <person name="Saier M.H. Jr."/>
            <person name="Klaenhammer T."/>
            <person name="Richardson P."/>
            <person name="Kozyavkin S."/>
            <person name="Weimer B.C."/>
            <person name="Mills D.A."/>
        </authorList>
    </citation>
    <scope>NUCLEOTIDE SEQUENCE [LARGE SCALE GENOMIC DNA]</scope>
    <source>
        <strain>SK11</strain>
    </source>
</reference>
<keyword id="KW-0131">Cell cycle</keyword>
<keyword id="KW-0132">Cell division</keyword>
<keyword id="KW-1003">Cell membrane</keyword>
<keyword id="KW-0133">Cell shape</keyword>
<keyword id="KW-0961">Cell wall biogenesis/degradation</keyword>
<keyword id="KW-0328">Glycosyltransferase</keyword>
<keyword id="KW-0472">Membrane</keyword>
<keyword id="KW-0573">Peptidoglycan synthesis</keyword>
<keyword id="KW-0808">Transferase</keyword>
<name>MURG_LACLS</name>
<accession>Q02XY0</accession>
<sequence>MRIIITGGGTGGHIYPALAFLKYLKQEEPDTEVLYIGTKKGLESKIVPRAGIQLKTVDIQGLRRSLSPQNIKTAYKFFKSVSDAKKIMKDFKPDVVLGTGGYVAGPVVFAAAQLKIPTIIHEGNSFPGITNRFLAKKVDRIAVGFHAAEQYFPSEKTSFTGNPRAQEVADAAAQVEKFEQPTVVIFGGSRGALKLNNAFIEALPELAKRSFKTVYASGEIYYDDYKETFDQYKENPNLDIRPYINNMTELLAKSQLFLGRSGSTTIAEVTALGLPAVYVPSPNVTADQQTKNAQEYVDQGAAIIVKDEELNGQSLVEAISDILENTEKYQEMQRASLKAGVPDASQRLYNLVKEISN</sequence>
<protein>
    <recommendedName>
        <fullName evidence="1">UDP-N-acetylglucosamine--N-acetylmuramyl-(pentapeptide) pyrophosphoryl-undecaprenol N-acetylglucosamine transferase</fullName>
        <ecNumber evidence="1">2.4.1.227</ecNumber>
    </recommendedName>
    <alternativeName>
        <fullName evidence="1">Undecaprenyl-PP-MurNAc-pentapeptide-UDPGlcNAc GlcNAc transferase</fullName>
    </alternativeName>
</protein>